<organism>
    <name type="scientific">Encephalitozoon cuniculi (strain GB-M1)</name>
    <name type="common">Microsporidian parasite</name>
    <dbReference type="NCBI Taxonomy" id="284813"/>
    <lineage>
        <taxon>Eukaryota</taxon>
        <taxon>Fungi</taxon>
        <taxon>Fungi incertae sedis</taxon>
        <taxon>Microsporidia</taxon>
        <taxon>Unikaryonidae</taxon>
        <taxon>Encephalitozoon</taxon>
    </lineage>
</organism>
<keyword id="KW-1185">Reference proteome</keyword>
<gene>
    <name type="ordered locus">ECU06_1620</name>
</gene>
<sequence length="579" mass="67185">MNQRDTLWILTAVLNATNCSMQLEHSSSFILRPNNQVVVFPFIFRGCNIAVLPTAKHSDLRRNPKRMEDSEPLFCNISHIIWSFTIGGVAYKDDDRFKRLFSERMEGYLKDISSNTSKVYMKGNKTFSEFLEAVYKRIFQCDGKRGGHVMRYGEDVMKEIGGMMENAPPELSEEEKRQHQRLWGNIKKYTEYLYNIERLKHLIEVEKMVCDACKEICLGLREEELMGLLAEGRMRKSLKMKLGDEEAGKKGYLEYAIVNDEILLDAHREYGGEVTKELVMQMLLGKKGEEIDKRYINKVANMIKERQRRREREIEKRVKKLLRDEEKAKGRKDGKKKSVNVSEVKEEESETEEVEAGEEAEMPSMEIGGARRKTGKKSRGGRKRYKIHKRVSRWRKSPEKIKEEWDRESEERWRGRSLEEIKEQKVFHDIAGVLELLRSEDADKFFIDTGEYTKGGSSRGRLVAIGVLESGEKKMLGVVEVGTFKDSPSGCPVVYHLMFRVTGIEEIGSVMSPEFAEANDIEKIDEDKEYQDMGKFVYPKGTEYEIVRREQSFQIVWGNPFDTSEVLCRLTIQCRPCVI</sequence>
<dbReference type="EMBL" id="AL590446">
    <property type="protein sequence ID" value="CAD25523.1"/>
    <property type="molecule type" value="Genomic_DNA"/>
</dbReference>
<dbReference type="RefSeq" id="NP_585919.1">
    <property type="nucleotide sequence ID" value="NM_001041541.1"/>
</dbReference>
<dbReference type="SMR" id="Q8SV63"/>
<dbReference type="STRING" id="284813.Q8SV63"/>
<dbReference type="GeneID" id="859347"/>
<dbReference type="KEGG" id="ecu:ECU06_1620"/>
<dbReference type="VEuPathDB" id="MicrosporidiaDB:ECU06_1620"/>
<dbReference type="HOGENOM" id="CLU_035434_0_0_1"/>
<dbReference type="InParanoid" id="Q8SV63"/>
<dbReference type="OrthoDB" id="2162691at2759"/>
<dbReference type="Proteomes" id="UP000000819">
    <property type="component" value="Chromosome VI"/>
</dbReference>
<dbReference type="InterPro" id="IPR022115">
    <property type="entry name" value="DUF3654"/>
</dbReference>
<dbReference type="InterPro" id="IPR011667">
    <property type="entry name" value="UPF0329"/>
</dbReference>
<dbReference type="Pfam" id="PF07753">
    <property type="entry name" value="DUF1609"/>
    <property type="match status" value="1"/>
</dbReference>
<dbReference type="Pfam" id="PF12376">
    <property type="entry name" value="DUF3654"/>
    <property type="match status" value="1"/>
</dbReference>
<protein>
    <recommendedName>
        <fullName>UPF0329 protein ECU06_1620</fullName>
    </recommendedName>
</protein>
<name>Y6G2_ENCCU</name>
<evidence type="ECO:0000256" key="1">
    <source>
        <dbReference type="SAM" id="MobiDB-lite"/>
    </source>
</evidence>
<evidence type="ECO:0000305" key="2"/>
<feature type="chain" id="PRO_0000223166" description="UPF0329 protein ECU06_1620">
    <location>
        <begin position="1"/>
        <end position="579"/>
    </location>
</feature>
<feature type="region of interest" description="Disordered" evidence="1">
    <location>
        <begin position="325"/>
        <end position="360"/>
    </location>
</feature>
<feature type="region of interest" description="Disordered" evidence="1">
    <location>
        <begin position="370"/>
        <end position="389"/>
    </location>
</feature>
<feature type="compositionally biased region" description="Basic residues" evidence="1">
    <location>
        <begin position="329"/>
        <end position="338"/>
    </location>
</feature>
<feature type="compositionally biased region" description="Acidic residues" evidence="1">
    <location>
        <begin position="345"/>
        <end position="360"/>
    </location>
</feature>
<reference key="1">
    <citation type="journal article" date="2001" name="Nature">
        <title>Genome sequence and gene compaction of the eukaryote parasite Encephalitozoon cuniculi.</title>
        <authorList>
            <person name="Katinka M.D."/>
            <person name="Duprat S."/>
            <person name="Cornillot E."/>
            <person name="Metenier G."/>
            <person name="Thomarat F."/>
            <person name="Prensier G."/>
            <person name="Barbe V."/>
            <person name="Peyretaillade E."/>
            <person name="Brottier P."/>
            <person name="Wincker P."/>
            <person name="Delbac F."/>
            <person name="El Alaoui H."/>
            <person name="Peyret P."/>
            <person name="Saurin W."/>
            <person name="Gouy M."/>
            <person name="Weissenbach J."/>
            <person name="Vivares C.P."/>
        </authorList>
    </citation>
    <scope>NUCLEOTIDE SEQUENCE [LARGE SCALE GENOMIC DNA]</scope>
    <source>
        <strain>GB-M1</strain>
    </source>
</reference>
<accession>Q8SV63</accession>
<comment type="similarity">
    <text evidence="2">Belongs to the UPF0329 family.</text>
</comment>
<proteinExistence type="inferred from homology"/>